<proteinExistence type="inferred from homology"/>
<gene>
    <name evidence="1" type="primary">lolA</name>
    <name type="ordered locus">Mpe_A1121</name>
</gene>
<organism>
    <name type="scientific">Methylibium petroleiphilum (strain ATCC BAA-1232 / LMG 22953 / PM1)</name>
    <dbReference type="NCBI Taxonomy" id="420662"/>
    <lineage>
        <taxon>Bacteria</taxon>
        <taxon>Pseudomonadati</taxon>
        <taxon>Pseudomonadota</taxon>
        <taxon>Betaproteobacteria</taxon>
        <taxon>Burkholderiales</taxon>
        <taxon>Sphaerotilaceae</taxon>
        <taxon>Methylibium</taxon>
    </lineage>
</organism>
<name>LOLA_METPP</name>
<keyword id="KW-0143">Chaperone</keyword>
<keyword id="KW-0574">Periplasm</keyword>
<keyword id="KW-0653">Protein transport</keyword>
<keyword id="KW-1185">Reference proteome</keyword>
<keyword id="KW-0732">Signal</keyword>
<keyword id="KW-0813">Transport</keyword>
<sequence>MRRGRVWLAALCLAAGAAHADAIDTLKGFVAEVKTGRAAFTQTVTSPDGAKKKSSSGSFEFSRPNRFRFAYTKPYEQLIVSDGQKVWLHDPDLNQVTVRPVGQALGATPAALLAGASLEKDFELKALPDDGGLQWAQALPRVKEGSFQSLKVGFRGKTLAAVEIVDAFGQRSRLEFSQFEADAKLPADRFGFTPPAGADVIAQ</sequence>
<comment type="function">
    <text evidence="1">Participates in the translocation of lipoproteins from the inner membrane to the outer membrane. Only forms a complex with a lipoprotein if the residue after the N-terminal Cys is not an aspartate (The Asp acts as a targeting signal to indicate that the lipoprotein should stay in the inner membrane).</text>
</comment>
<comment type="subunit">
    <text evidence="1">Monomer.</text>
</comment>
<comment type="subcellular location">
    <subcellularLocation>
        <location evidence="1">Periplasm</location>
    </subcellularLocation>
</comment>
<comment type="similarity">
    <text evidence="1">Belongs to the LolA family.</text>
</comment>
<evidence type="ECO:0000255" key="1">
    <source>
        <dbReference type="HAMAP-Rule" id="MF_00240"/>
    </source>
</evidence>
<feature type="signal peptide" evidence="1">
    <location>
        <begin position="1"/>
        <end position="20"/>
    </location>
</feature>
<feature type="chain" id="PRO_0000336654" description="Outer-membrane lipoprotein carrier protein">
    <location>
        <begin position="21"/>
        <end position="203"/>
    </location>
</feature>
<reference key="1">
    <citation type="journal article" date="2007" name="J. Bacteriol.">
        <title>Whole-genome analysis of the methyl tert-butyl ether-degrading beta-proteobacterium Methylibium petroleiphilum PM1.</title>
        <authorList>
            <person name="Kane S.R."/>
            <person name="Chakicherla A.Y."/>
            <person name="Chain P.S.G."/>
            <person name="Schmidt R."/>
            <person name="Shin M.W."/>
            <person name="Legler T.C."/>
            <person name="Scow K.M."/>
            <person name="Larimer F.W."/>
            <person name="Lucas S.M."/>
            <person name="Richardson P.M."/>
            <person name="Hristova K.R."/>
        </authorList>
    </citation>
    <scope>NUCLEOTIDE SEQUENCE [LARGE SCALE GENOMIC DNA]</scope>
    <source>
        <strain>ATCC BAA-1232 / LMG 22953 / PM1</strain>
    </source>
</reference>
<protein>
    <recommendedName>
        <fullName evidence="1">Outer-membrane lipoprotein carrier protein</fullName>
    </recommendedName>
</protein>
<accession>A2SEU3</accession>
<dbReference type="EMBL" id="CP000555">
    <property type="protein sequence ID" value="ABM94082.1"/>
    <property type="molecule type" value="Genomic_DNA"/>
</dbReference>
<dbReference type="RefSeq" id="WP_011828719.1">
    <property type="nucleotide sequence ID" value="NC_008825.1"/>
</dbReference>
<dbReference type="SMR" id="A2SEU3"/>
<dbReference type="STRING" id="420662.Mpe_A1121"/>
<dbReference type="KEGG" id="mpt:Mpe_A1121"/>
<dbReference type="eggNOG" id="COG2834">
    <property type="taxonomic scope" value="Bacteria"/>
</dbReference>
<dbReference type="HOGENOM" id="CLU_087560_0_0_4"/>
<dbReference type="Proteomes" id="UP000000366">
    <property type="component" value="Chromosome"/>
</dbReference>
<dbReference type="GO" id="GO:0042597">
    <property type="term" value="C:periplasmic space"/>
    <property type="evidence" value="ECO:0007669"/>
    <property type="project" value="UniProtKB-SubCell"/>
</dbReference>
<dbReference type="GO" id="GO:0044874">
    <property type="term" value="P:lipoprotein localization to outer membrane"/>
    <property type="evidence" value="ECO:0007669"/>
    <property type="project" value="UniProtKB-UniRule"/>
</dbReference>
<dbReference type="GO" id="GO:0042953">
    <property type="term" value="P:lipoprotein transport"/>
    <property type="evidence" value="ECO:0007669"/>
    <property type="project" value="InterPro"/>
</dbReference>
<dbReference type="CDD" id="cd16325">
    <property type="entry name" value="LolA"/>
    <property type="match status" value="1"/>
</dbReference>
<dbReference type="Gene3D" id="2.50.20.10">
    <property type="entry name" value="Lipoprotein localisation LolA/LolB/LppX"/>
    <property type="match status" value="1"/>
</dbReference>
<dbReference type="HAMAP" id="MF_00240">
    <property type="entry name" value="LolA"/>
    <property type="match status" value="1"/>
</dbReference>
<dbReference type="InterPro" id="IPR029046">
    <property type="entry name" value="LolA/LolB/LppX"/>
</dbReference>
<dbReference type="InterPro" id="IPR004564">
    <property type="entry name" value="OM_lipoprot_carrier_LolA-like"/>
</dbReference>
<dbReference type="InterPro" id="IPR018323">
    <property type="entry name" value="OM_lipoprot_carrier_LolA_Pbac"/>
</dbReference>
<dbReference type="NCBIfam" id="TIGR00547">
    <property type="entry name" value="lolA"/>
    <property type="match status" value="1"/>
</dbReference>
<dbReference type="PANTHER" id="PTHR35869">
    <property type="entry name" value="OUTER-MEMBRANE LIPOPROTEIN CARRIER PROTEIN"/>
    <property type="match status" value="1"/>
</dbReference>
<dbReference type="PANTHER" id="PTHR35869:SF1">
    <property type="entry name" value="OUTER-MEMBRANE LIPOPROTEIN CARRIER PROTEIN"/>
    <property type="match status" value="1"/>
</dbReference>
<dbReference type="Pfam" id="PF03548">
    <property type="entry name" value="LolA"/>
    <property type="match status" value="1"/>
</dbReference>
<dbReference type="SUPFAM" id="SSF89392">
    <property type="entry name" value="Prokaryotic lipoproteins and lipoprotein localization factors"/>
    <property type="match status" value="1"/>
</dbReference>